<feature type="chain" id="PRO_0000057862" description="Gap junction beta-3 protein">
    <location>
        <begin position="1"/>
        <end position="270"/>
    </location>
</feature>
<feature type="topological domain" description="Cytoplasmic" evidence="2">
    <location>
        <begin position="1"/>
        <end position="20"/>
    </location>
</feature>
<feature type="transmembrane region" description="Helical" evidence="2">
    <location>
        <begin position="21"/>
        <end position="40"/>
    </location>
</feature>
<feature type="topological domain" description="Extracellular" evidence="2">
    <location>
        <begin position="41"/>
        <end position="75"/>
    </location>
</feature>
<feature type="transmembrane region" description="Helical" evidence="2">
    <location>
        <begin position="76"/>
        <end position="98"/>
    </location>
</feature>
<feature type="topological domain" description="Cytoplasmic" evidence="2">
    <location>
        <begin position="99"/>
        <end position="126"/>
    </location>
</feature>
<feature type="transmembrane region" description="Helical" evidence="2">
    <location>
        <begin position="127"/>
        <end position="149"/>
    </location>
</feature>
<feature type="topological domain" description="Extracellular" evidence="2">
    <location>
        <begin position="150"/>
        <end position="187"/>
    </location>
</feature>
<feature type="transmembrane region" description="Helical" evidence="2">
    <location>
        <begin position="188"/>
        <end position="210"/>
    </location>
</feature>
<feature type="topological domain" description="Cytoplasmic" evidence="2">
    <location>
        <begin position="211"/>
        <end position="270"/>
    </location>
</feature>
<feature type="region of interest" description="Disordered" evidence="3">
    <location>
        <begin position="250"/>
        <end position="270"/>
    </location>
</feature>
<feature type="compositionally biased region" description="Polar residues" evidence="3">
    <location>
        <begin position="258"/>
        <end position="270"/>
    </location>
</feature>
<feature type="sequence variant" id="VAR_002147" description="In EKVP1; dbSNP:rs74315316." evidence="11">
    <original>G</original>
    <variation>D</variation>
    <location>
        <position position="12"/>
    </location>
</feature>
<feature type="sequence variant" id="VAR_002148" description="In EKVP1; dbSNP:rs74315315." evidence="11">
    <original>G</original>
    <variation>R</variation>
    <location>
        <position position="12"/>
    </location>
</feature>
<feature type="sequence variant" id="VAR_011978" description="In dbSNP:rs1805063." evidence="6 7 9 10">
    <original>R</original>
    <variation>W</variation>
    <location>
        <position position="32"/>
    </location>
</feature>
<feature type="sequence variant" id="VAR_015085" description="In EKVP1; dbSNP:rs74315321." evidence="5 8">
    <original>R</original>
    <variation>P</variation>
    <location>
        <position position="42"/>
    </location>
</feature>
<feature type="sequence variant" id="VAR_002149" description="In EKVP1; dbSNP:rs74315317." evidence="11">
    <original>C</original>
    <variation>S</variation>
    <location>
        <position position="86"/>
    </location>
</feature>
<feature type="sequence variant" id="VAR_015086" description="In EKVP1." evidence="8">
    <original>F</original>
    <variation>L</variation>
    <location>
        <position position="137"/>
    </location>
</feature>
<feature type="sequence variant" id="VAR_015087" description="In DFNA2B; dbSNP:rs74315320." evidence="4">
    <original>I</original>
    <variation>V</variation>
    <location>
        <position position="141"/>
    </location>
</feature>
<feature type="sequence variant" id="VAR_002150" description="In DFNA2B; uncertain significance; dbSNP:rs74315318." evidence="12">
    <original>E</original>
    <variation>K</variation>
    <location>
        <position position="183"/>
    </location>
</feature>
<feature type="sequence variant" id="VAR_022423" description="In dbSNP:rs61734064." evidence="7 10">
    <original>V</original>
    <variation>I</variation>
    <location>
        <position position="200"/>
    </location>
</feature>
<protein>
    <recommendedName>
        <fullName>Gap junction beta-3 protein</fullName>
    </recommendedName>
    <alternativeName>
        <fullName>Connexin-31</fullName>
        <shortName>Cx31</shortName>
    </alternativeName>
</protein>
<proteinExistence type="evidence at protein level"/>
<organism>
    <name type="scientific">Homo sapiens</name>
    <name type="common">Human</name>
    <dbReference type="NCBI Taxonomy" id="9606"/>
    <lineage>
        <taxon>Eukaryota</taxon>
        <taxon>Metazoa</taxon>
        <taxon>Chordata</taxon>
        <taxon>Craniata</taxon>
        <taxon>Vertebrata</taxon>
        <taxon>Euteleostomi</taxon>
        <taxon>Mammalia</taxon>
        <taxon>Eutheria</taxon>
        <taxon>Euarchontoglires</taxon>
        <taxon>Primates</taxon>
        <taxon>Haplorrhini</taxon>
        <taxon>Catarrhini</taxon>
        <taxon>Hominidae</taxon>
        <taxon>Homo</taxon>
    </lineage>
</organism>
<name>CXB3_HUMAN</name>
<gene>
    <name type="primary">GJB3</name>
    <name type="synonym">CX31</name>
</gene>
<keyword id="KW-0965">Cell junction</keyword>
<keyword id="KW-1003">Cell membrane</keyword>
<keyword id="KW-0209">Deafness</keyword>
<keyword id="KW-0225">Disease variant</keyword>
<keyword id="KW-0303">Gap junction</keyword>
<keyword id="KW-0472">Membrane</keyword>
<keyword id="KW-1010">Non-syndromic deafness</keyword>
<keyword id="KW-1007">Palmoplantar keratoderma</keyword>
<keyword id="KW-1267">Proteomics identification</keyword>
<keyword id="KW-1185">Reference proteome</keyword>
<keyword id="KW-0812">Transmembrane</keyword>
<keyword id="KW-1133">Transmembrane helix</keyword>
<accession>O75712</accession>
<accession>B2R790</accession>
<accession>Q2TAZ8</accession>
<dbReference type="EMBL" id="AJ004856">
    <property type="protein sequence ID" value="CAA06165.1"/>
    <property type="molecule type" value="Genomic_DNA"/>
</dbReference>
<dbReference type="EMBL" id="AF052692">
    <property type="protein sequence ID" value="AAD11816.1"/>
    <property type="molecule type" value="mRNA"/>
</dbReference>
<dbReference type="EMBL" id="AF099730">
    <property type="protein sequence ID" value="AAC95471.1"/>
    <property type="molecule type" value="Genomic_DNA"/>
</dbReference>
<dbReference type="EMBL" id="AK312890">
    <property type="protein sequence ID" value="BAG35737.1"/>
    <property type="molecule type" value="mRNA"/>
</dbReference>
<dbReference type="EMBL" id="AL121988">
    <property type="status" value="NOT_ANNOTATED_CDS"/>
    <property type="molecule type" value="Genomic_DNA"/>
</dbReference>
<dbReference type="EMBL" id="CH471059">
    <property type="protein sequence ID" value="EAX07442.1"/>
    <property type="molecule type" value="Genomic_DNA"/>
</dbReference>
<dbReference type="EMBL" id="BC012918">
    <property type="protein sequence ID" value="AAH12918.1"/>
    <property type="molecule type" value="mRNA"/>
</dbReference>
<dbReference type="EMBL" id="BC110640">
    <property type="protein sequence ID" value="AAI10641.1"/>
    <property type="molecule type" value="mRNA"/>
</dbReference>
<dbReference type="CCDS" id="CCDS384.1"/>
<dbReference type="PIR" id="JE0274">
    <property type="entry name" value="JE0274"/>
</dbReference>
<dbReference type="RefSeq" id="NP_001005752.1">
    <property type="nucleotide sequence ID" value="NM_001005752.2"/>
</dbReference>
<dbReference type="RefSeq" id="NP_076872.1">
    <property type="nucleotide sequence ID" value="NM_024009.3"/>
</dbReference>
<dbReference type="SMR" id="O75712"/>
<dbReference type="BioGRID" id="108973">
    <property type="interactions" value="21"/>
</dbReference>
<dbReference type="CORUM" id="O75712"/>
<dbReference type="FunCoup" id="O75712">
    <property type="interactions" value="20"/>
</dbReference>
<dbReference type="IntAct" id="O75712">
    <property type="interactions" value="17"/>
</dbReference>
<dbReference type="STRING" id="9606.ENSP00000362464"/>
<dbReference type="TCDB" id="1.A.24.1.10">
    <property type="family name" value="the gap junction-forming connexin (connexin) family"/>
</dbReference>
<dbReference type="iPTMnet" id="O75712"/>
<dbReference type="PhosphoSitePlus" id="O75712"/>
<dbReference type="SwissPalm" id="O75712"/>
<dbReference type="BioMuta" id="GJB3"/>
<dbReference type="jPOST" id="O75712"/>
<dbReference type="MassIVE" id="O75712"/>
<dbReference type="PaxDb" id="9606-ENSP00000362464"/>
<dbReference type="PeptideAtlas" id="O75712"/>
<dbReference type="ProteomicsDB" id="50170"/>
<dbReference type="Antibodypedia" id="31497">
    <property type="antibodies" value="303 antibodies from 30 providers"/>
</dbReference>
<dbReference type="DNASU" id="2707"/>
<dbReference type="Ensembl" id="ENST00000373362.3">
    <property type="protein sequence ID" value="ENSP00000362460.3"/>
    <property type="gene ID" value="ENSG00000188910.8"/>
</dbReference>
<dbReference type="Ensembl" id="ENST00000373366.3">
    <property type="protein sequence ID" value="ENSP00000362464.2"/>
    <property type="gene ID" value="ENSG00000188910.8"/>
</dbReference>
<dbReference type="GeneID" id="2707"/>
<dbReference type="KEGG" id="hsa:2707"/>
<dbReference type="MANE-Select" id="ENST00000373366.3">
    <property type="protein sequence ID" value="ENSP00000362464.2"/>
    <property type="RefSeq nucleotide sequence ID" value="NM_024009.3"/>
    <property type="RefSeq protein sequence ID" value="NP_076872.1"/>
</dbReference>
<dbReference type="UCSC" id="uc001bxx.4">
    <property type="organism name" value="human"/>
</dbReference>
<dbReference type="AGR" id="HGNC:4285"/>
<dbReference type="CTD" id="2707"/>
<dbReference type="DisGeNET" id="2707"/>
<dbReference type="GeneCards" id="GJB3"/>
<dbReference type="GeneReviews" id="GJB3"/>
<dbReference type="HGNC" id="HGNC:4285">
    <property type="gene designation" value="GJB3"/>
</dbReference>
<dbReference type="HPA" id="ENSG00000188910">
    <property type="expression patterns" value="Group enriched (esophagus, skin)"/>
</dbReference>
<dbReference type="MalaCards" id="GJB3"/>
<dbReference type="MIM" id="133200">
    <property type="type" value="phenotype"/>
</dbReference>
<dbReference type="MIM" id="603324">
    <property type="type" value="gene+phenotype"/>
</dbReference>
<dbReference type="MIM" id="612644">
    <property type="type" value="phenotype"/>
</dbReference>
<dbReference type="neXtProt" id="NX_O75712"/>
<dbReference type="OpenTargets" id="ENSG00000188910"/>
<dbReference type="Orphanet" id="317">
    <property type="disease" value="Erythrokeratodermia variabilis"/>
</dbReference>
<dbReference type="Orphanet" id="139512">
    <property type="disease" value="Neuropathy with hearing impairment"/>
</dbReference>
<dbReference type="Orphanet" id="90635">
    <property type="disease" value="Rare autosomal dominant non-syndromic sensorineural deafness type DFNA"/>
</dbReference>
<dbReference type="Orphanet" id="90636">
    <property type="disease" value="Rare autosomal recessive non-syndromic sensorineural deafness type DFNB"/>
</dbReference>
<dbReference type="PharmGKB" id="PA28696"/>
<dbReference type="VEuPathDB" id="HostDB:ENSG00000188910"/>
<dbReference type="eggNOG" id="ENOG502QRC0">
    <property type="taxonomic scope" value="Eukaryota"/>
</dbReference>
<dbReference type="GeneTree" id="ENSGT01030000234513"/>
<dbReference type="HOGENOM" id="CLU_037388_4_1_1"/>
<dbReference type="InParanoid" id="O75712"/>
<dbReference type="OMA" id="HFFPISN"/>
<dbReference type="OrthoDB" id="9441654at2759"/>
<dbReference type="PAN-GO" id="O75712">
    <property type="GO annotations" value="3 GO annotations based on evolutionary models"/>
</dbReference>
<dbReference type="PhylomeDB" id="O75712"/>
<dbReference type="TreeFam" id="TF329606"/>
<dbReference type="PathwayCommons" id="O75712"/>
<dbReference type="Reactome" id="R-HSA-190861">
    <property type="pathway name" value="Gap junction assembly"/>
</dbReference>
<dbReference type="Reactome" id="R-HSA-9725554">
    <property type="pathway name" value="Differentiation of Keratinocytes in Interfollicular Epidermis in Mammalian Skin"/>
</dbReference>
<dbReference type="SignaLink" id="O75712"/>
<dbReference type="BioGRID-ORCS" id="2707">
    <property type="hits" value="22 hits in 1138 CRISPR screens"/>
</dbReference>
<dbReference type="GeneWiki" id="GJB3"/>
<dbReference type="GenomeRNAi" id="2707"/>
<dbReference type="Pharos" id="O75712">
    <property type="development level" value="Tbio"/>
</dbReference>
<dbReference type="PRO" id="PR:O75712"/>
<dbReference type="Proteomes" id="UP000005640">
    <property type="component" value="Chromosome 1"/>
</dbReference>
<dbReference type="RNAct" id="O75712">
    <property type="molecule type" value="protein"/>
</dbReference>
<dbReference type="Bgee" id="ENSG00000188910">
    <property type="expression patterns" value="Expressed in skin of abdomen and 140 other cell types or tissues"/>
</dbReference>
<dbReference type="ExpressionAtlas" id="O75712">
    <property type="expression patterns" value="baseline and differential"/>
</dbReference>
<dbReference type="GO" id="GO:0030054">
    <property type="term" value="C:cell junction"/>
    <property type="evidence" value="ECO:0000314"/>
    <property type="project" value="HPA"/>
</dbReference>
<dbReference type="GO" id="GO:0005922">
    <property type="term" value="C:connexin complex"/>
    <property type="evidence" value="ECO:0000318"/>
    <property type="project" value="GO_Central"/>
</dbReference>
<dbReference type="GO" id="GO:0005737">
    <property type="term" value="C:cytoplasm"/>
    <property type="evidence" value="ECO:0007669"/>
    <property type="project" value="Ensembl"/>
</dbReference>
<dbReference type="GO" id="GO:0005921">
    <property type="term" value="C:gap junction"/>
    <property type="evidence" value="ECO:0000303"/>
    <property type="project" value="UniProtKB"/>
</dbReference>
<dbReference type="GO" id="GO:0043231">
    <property type="term" value="C:intracellular membrane-bounded organelle"/>
    <property type="evidence" value="ECO:0000314"/>
    <property type="project" value="HPA"/>
</dbReference>
<dbReference type="GO" id="GO:0005243">
    <property type="term" value="F:gap junction channel activity"/>
    <property type="evidence" value="ECO:0000318"/>
    <property type="project" value="GO_Central"/>
</dbReference>
<dbReference type="GO" id="GO:0007267">
    <property type="term" value="P:cell-cell signaling"/>
    <property type="evidence" value="ECO:0000318"/>
    <property type="project" value="GO_Central"/>
</dbReference>
<dbReference type="GO" id="GO:0001890">
    <property type="term" value="P:placenta development"/>
    <property type="evidence" value="ECO:0007669"/>
    <property type="project" value="Ensembl"/>
</dbReference>
<dbReference type="FunFam" id="1.20.1440.80:FF:000001">
    <property type="entry name" value="Gap junction alpha-1"/>
    <property type="match status" value="1"/>
</dbReference>
<dbReference type="Gene3D" id="1.20.1440.80">
    <property type="entry name" value="Gap junction channel protein cysteine-rich domain"/>
    <property type="match status" value="1"/>
</dbReference>
<dbReference type="InterPro" id="IPR000500">
    <property type="entry name" value="Connexin"/>
</dbReference>
<dbReference type="InterPro" id="IPR002269">
    <property type="entry name" value="Connexin31"/>
</dbReference>
<dbReference type="InterPro" id="IPR019570">
    <property type="entry name" value="Connexin_CCC"/>
</dbReference>
<dbReference type="InterPro" id="IPR017990">
    <property type="entry name" value="Connexin_CS"/>
</dbReference>
<dbReference type="InterPro" id="IPR013092">
    <property type="entry name" value="Connexin_N"/>
</dbReference>
<dbReference type="InterPro" id="IPR038359">
    <property type="entry name" value="Connexin_N_sf"/>
</dbReference>
<dbReference type="PANTHER" id="PTHR11984">
    <property type="entry name" value="CONNEXIN"/>
    <property type="match status" value="1"/>
</dbReference>
<dbReference type="PANTHER" id="PTHR11984:SF65">
    <property type="entry name" value="GAP JUNCTION BETA-3 PROTEIN"/>
    <property type="match status" value="1"/>
</dbReference>
<dbReference type="Pfam" id="PF00029">
    <property type="entry name" value="Connexin"/>
    <property type="match status" value="1"/>
</dbReference>
<dbReference type="PRINTS" id="PR00206">
    <property type="entry name" value="CONNEXIN"/>
</dbReference>
<dbReference type="PRINTS" id="PR01140">
    <property type="entry name" value="CONNEXINB3"/>
</dbReference>
<dbReference type="SMART" id="SM00037">
    <property type="entry name" value="CNX"/>
    <property type="match status" value="1"/>
</dbReference>
<dbReference type="SMART" id="SM01089">
    <property type="entry name" value="Connexin_CCC"/>
    <property type="match status" value="1"/>
</dbReference>
<dbReference type="PROSITE" id="PS00407">
    <property type="entry name" value="CONNEXINS_1"/>
    <property type="match status" value="1"/>
</dbReference>
<dbReference type="PROSITE" id="PS00408">
    <property type="entry name" value="CONNEXINS_2"/>
    <property type="match status" value="1"/>
</dbReference>
<comment type="function">
    <text>One gap junction consists of a cluster of closely packed pairs of transmembrane channels, the connexons, through which materials of low MW diffuse from one cell to a neighboring cell.</text>
</comment>
<comment type="subunit">
    <text evidence="1">A connexon is composed of a hexamer of connexins. Interacts with CNST (By similarity).</text>
</comment>
<comment type="interaction">
    <interactant intactId="EBI-3908586">
        <id>O75712</id>
    </interactant>
    <interactant intactId="EBI-8648738">
        <id>Q8WVV5</id>
        <label>BTN2A2</label>
    </interactant>
    <organismsDiffer>false</organismsDiffer>
    <experiments>3</experiments>
</comment>
<comment type="interaction">
    <interactant intactId="EBI-3908586">
        <id>O75712</id>
    </interactant>
    <interactant intactId="EBI-372265">
        <id>P21964</id>
        <label>COMT</label>
    </interactant>
    <organismsDiffer>false</organismsDiffer>
    <experiments>3</experiments>
</comment>
<comment type="interaction">
    <interactant intactId="EBI-3908586">
        <id>O75712</id>
    </interactant>
    <interactant intactId="EBI-6166686">
        <id>Q96F15</id>
        <label>GIMAP5</label>
    </interactant>
    <organismsDiffer>false</organismsDiffer>
    <experiments>3</experiments>
</comment>
<comment type="interaction">
    <interactant intactId="EBI-3908586">
        <id>O75712</id>
    </interactant>
    <interactant intactId="EBI-720480">
        <id>P24593</id>
        <label>IGFBP5</label>
    </interactant>
    <organismsDiffer>false</organismsDiffer>
    <experiments>3</experiments>
</comment>
<comment type="interaction">
    <interactant intactId="EBI-3908586">
        <id>O75712</id>
    </interactant>
    <interactant intactId="EBI-8070286">
        <id>O43561-2</id>
        <label>LAT</label>
    </interactant>
    <organismsDiffer>false</organismsDiffer>
    <experiments>3</experiments>
</comment>
<comment type="interaction">
    <interactant intactId="EBI-3908586">
        <id>O75712</id>
    </interactant>
    <interactant intactId="EBI-2820517">
        <id>Q8TAF8</id>
        <label>LHFPL5</label>
    </interactant>
    <organismsDiffer>false</organismsDiffer>
    <experiments>3</experiments>
</comment>
<comment type="interaction">
    <interactant intactId="EBI-3908586">
        <id>O75712</id>
    </interactant>
    <interactant intactId="EBI-17633886">
        <id>O43934</id>
        <label>MFSD11</label>
    </interactant>
    <organismsDiffer>false</organismsDiffer>
    <experiments>3</experiments>
</comment>
<comment type="interaction">
    <interactant intactId="EBI-3908586">
        <id>O75712</id>
    </interactant>
    <interactant intactId="EBI-2908417">
        <id>Q9UHG3</id>
        <label>PCYOX1</label>
    </interactant>
    <organismsDiffer>false</organismsDiffer>
    <experiments>2</experiments>
</comment>
<comment type="interaction">
    <interactant intactId="EBI-3908586">
        <id>O75712</id>
    </interactant>
    <interactant intactId="EBI-1052363">
        <id>Q9NS64</id>
        <label>RPRM</label>
    </interactant>
    <organismsDiffer>false</organismsDiffer>
    <experiments>3</experiments>
</comment>
<comment type="interaction">
    <interactant intactId="EBI-3908586">
        <id>O75712</id>
    </interactant>
    <interactant intactId="EBI-10329948">
        <id>Q9Y6X1</id>
        <label>SERP1</label>
    </interactant>
    <organismsDiffer>false</organismsDiffer>
    <experiments>3</experiments>
</comment>
<comment type="interaction">
    <interactant intactId="EBI-3908586">
        <id>O75712</id>
    </interactant>
    <interactant intactId="EBI-12111910">
        <id>Q5BJF2</id>
        <label>TMEM97</label>
    </interactant>
    <organismsDiffer>false</organismsDiffer>
    <experiments>3</experiments>
</comment>
<comment type="interaction">
    <interactant intactId="EBI-3908586">
        <id>O75712</id>
    </interactant>
    <interactant intactId="EBI-2820477">
        <id>Q71RG4</id>
        <label>TMUB2</label>
    </interactant>
    <organismsDiffer>false</organismsDiffer>
    <experiments>3</experiments>
</comment>
<comment type="interaction">
    <interactant intactId="EBI-3908586">
        <id>O75712</id>
    </interactant>
    <interactant intactId="EBI-11988865">
        <id>A5PKU2</id>
        <label>TUSC5</label>
    </interactant>
    <organismsDiffer>false</organismsDiffer>
    <experiments>3</experiments>
</comment>
<comment type="subcellular location">
    <subcellularLocation>
        <location>Cell membrane</location>
        <topology>Multi-pass membrane protein</topology>
    </subcellularLocation>
    <subcellularLocation>
        <location>Cell junction</location>
        <location>Gap junction</location>
    </subcellularLocation>
</comment>
<comment type="disease" evidence="5 8 11">
    <disease id="DI-00483">
        <name>Erythrokeratodermia variabilis et progressiva 1</name>
        <acronym>EKVP1</acronym>
        <description>A form of erythrokeratodermia variabilis et progressiva, a genodermatosis characterized by the coexistence of two independent skin lesions: transient erythema and hyperkeratosis that is usually localized but occasionally occurs in its generalized form. Clinical presentation varies significantly within a family and from one family to another. Palmoplantar keratoderma is present in around 50% of cases.</description>
        <dbReference type="MIM" id="133200"/>
    </disease>
    <text>The disease is caused by variants affecting the gene represented in this entry.</text>
</comment>
<comment type="disease" evidence="4 12">
    <disease id="DI-00833">
        <name>Deafness, autosomal dominant, 2B</name>
        <acronym>DFNA2B</acronym>
        <description>A form of non-syndromic sensorineural deafness characterized by progressive high frequency hearing loss in adulthood, with milder expression in females.</description>
        <dbReference type="MIM" id="612644"/>
    </disease>
    <text>The disease is caused by variants affecting the gene represented in this entry.</text>
</comment>
<comment type="similarity">
    <text evidence="13">Belongs to the connexin family. Beta-type (group I) subfamily.</text>
</comment>
<comment type="online information" name="Connexin-deafness homepage">
    <link uri="http://perelman.crg.es/deafness/"/>
</comment>
<comment type="online information" name="Hereditary hearing loss homepage">
    <link uri="https://hereditaryhearingloss.org/dominant"/>
    <text>Gene page</text>
</comment>
<reference key="1">
    <citation type="journal article" date="1998" name="Biochem. Biophys. Res. Commun.">
        <title>Human gap junction protein connexin31: molecular cloning and expression analysis.</title>
        <authorList>
            <person name="Wenzel K."/>
            <person name="Manthey D."/>
            <person name="Willecke K."/>
            <person name="Grzeschik K.-H."/>
            <person name="Traub O."/>
        </authorList>
    </citation>
    <scope>NUCLEOTIDE SEQUENCE [GENOMIC DNA]</scope>
    <source>
        <tissue>Placenta</tissue>
    </source>
</reference>
<reference key="2">
    <citation type="submission" date="1999-02" db="EMBL/GenBank/DDBJ databases">
        <title>Molecular cloning of human connexin 31 and 31.1 genes.</title>
        <authorList>
            <person name="Xia J.-H."/>
            <person name="Pan Q."/>
            <person name="Liu C.-Y."/>
            <person name="Zheng D."/>
            <person name="Xie W."/>
        </authorList>
    </citation>
    <scope>NUCLEOTIDE SEQUENCE [MRNA]</scope>
</reference>
<reference key="3">
    <citation type="journal article" date="1998" name="Nat. Genet.">
        <title>Mutations in the human connexin gene GJB3 cause erythrokeratodermia variabilis.</title>
        <authorList>
            <person name="Richard G."/>
            <person name="Smith L.E."/>
            <person name="Bailey R.A."/>
            <person name="Itin P."/>
            <person name="Hohl D."/>
            <person name="Epstein E.H. Jr."/>
            <person name="DiGiovanna J.J."/>
            <person name="Compton J.G."/>
            <person name="Bale S.J."/>
        </authorList>
    </citation>
    <scope>NUCLEOTIDE SEQUENCE [GENOMIC DNA]</scope>
    <scope>VARIANTS EKVP1 ASP-12; ARG-12 AND SER-86</scope>
</reference>
<reference key="4">
    <citation type="journal article" date="2004" name="Nat. Genet.">
        <title>Complete sequencing and characterization of 21,243 full-length human cDNAs.</title>
        <authorList>
            <person name="Ota T."/>
            <person name="Suzuki Y."/>
            <person name="Nishikawa T."/>
            <person name="Otsuki T."/>
            <person name="Sugiyama T."/>
            <person name="Irie R."/>
            <person name="Wakamatsu A."/>
            <person name="Hayashi K."/>
            <person name="Sato H."/>
            <person name="Nagai K."/>
            <person name="Kimura K."/>
            <person name="Makita H."/>
            <person name="Sekine M."/>
            <person name="Obayashi M."/>
            <person name="Nishi T."/>
            <person name="Shibahara T."/>
            <person name="Tanaka T."/>
            <person name="Ishii S."/>
            <person name="Yamamoto J."/>
            <person name="Saito K."/>
            <person name="Kawai Y."/>
            <person name="Isono Y."/>
            <person name="Nakamura Y."/>
            <person name="Nagahari K."/>
            <person name="Murakami K."/>
            <person name="Yasuda T."/>
            <person name="Iwayanagi T."/>
            <person name="Wagatsuma M."/>
            <person name="Shiratori A."/>
            <person name="Sudo H."/>
            <person name="Hosoiri T."/>
            <person name="Kaku Y."/>
            <person name="Kodaira H."/>
            <person name="Kondo H."/>
            <person name="Sugawara M."/>
            <person name="Takahashi M."/>
            <person name="Kanda K."/>
            <person name="Yokoi T."/>
            <person name="Furuya T."/>
            <person name="Kikkawa E."/>
            <person name="Omura Y."/>
            <person name="Abe K."/>
            <person name="Kamihara K."/>
            <person name="Katsuta N."/>
            <person name="Sato K."/>
            <person name="Tanikawa M."/>
            <person name="Yamazaki M."/>
            <person name="Ninomiya K."/>
            <person name="Ishibashi T."/>
            <person name="Yamashita H."/>
            <person name="Murakawa K."/>
            <person name="Fujimori K."/>
            <person name="Tanai H."/>
            <person name="Kimata M."/>
            <person name="Watanabe M."/>
            <person name="Hiraoka S."/>
            <person name="Chiba Y."/>
            <person name="Ishida S."/>
            <person name="Ono Y."/>
            <person name="Takiguchi S."/>
            <person name="Watanabe S."/>
            <person name="Yosida M."/>
            <person name="Hotuta T."/>
            <person name="Kusano J."/>
            <person name="Kanehori K."/>
            <person name="Takahashi-Fujii A."/>
            <person name="Hara H."/>
            <person name="Tanase T.-O."/>
            <person name="Nomura Y."/>
            <person name="Togiya S."/>
            <person name="Komai F."/>
            <person name="Hara R."/>
            <person name="Takeuchi K."/>
            <person name="Arita M."/>
            <person name="Imose N."/>
            <person name="Musashino K."/>
            <person name="Yuuki H."/>
            <person name="Oshima A."/>
            <person name="Sasaki N."/>
            <person name="Aotsuka S."/>
            <person name="Yoshikawa Y."/>
            <person name="Matsunawa H."/>
            <person name="Ichihara T."/>
            <person name="Shiohata N."/>
            <person name="Sano S."/>
            <person name="Moriya S."/>
            <person name="Momiyama H."/>
            <person name="Satoh N."/>
            <person name="Takami S."/>
            <person name="Terashima Y."/>
            <person name="Suzuki O."/>
            <person name="Nakagawa S."/>
            <person name="Senoh A."/>
            <person name="Mizoguchi H."/>
            <person name="Goto Y."/>
            <person name="Shimizu F."/>
            <person name="Wakebe H."/>
            <person name="Hishigaki H."/>
            <person name="Watanabe T."/>
            <person name="Sugiyama A."/>
            <person name="Takemoto M."/>
            <person name="Kawakami B."/>
            <person name="Yamazaki M."/>
            <person name="Watanabe K."/>
            <person name="Kumagai A."/>
            <person name="Itakura S."/>
            <person name="Fukuzumi Y."/>
            <person name="Fujimori Y."/>
            <person name="Komiyama M."/>
            <person name="Tashiro H."/>
            <person name="Tanigami A."/>
            <person name="Fujiwara T."/>
            <person name="Ono T."/>
            <person name="Yamada K."/>
            <person name="Fujii Y."/>
            <person name="Ozaki K."/>
            <person name="Hirao M."/>
            <person name="Ohmori Y."/>
            <person name="Kawabata A."/>
            <person name="Hikiji T."/>
            <person name="Kobatake N."/>
            <person name="Inagaki H."/>
            <person name="Ikema Y."/>
            <person name="Okamoto S."/>
            <person name="Okitani R."/>
            <person name="Kawakami T."/>
            <person name="Noguchi S."/>
            <person name="Itoh T."/>
            <person name="Shigeta K."/>
            <person name="Senba T."/>
            <person name="Matsumura K."/>
            <person name="Nakajima Y."/>
            <person name="Mizuno T."/>
            <person name="Morinaga M."/>
            <person name="Sasaki M."/>
            <person name="Togashi T."/>
            <person name="Oyama M."/>
            <person name="Hata H."/>
            <person name="Watanabe M."/>
            <person name="Komatsu T."/>
            <person name="Mizushima-Sugano J."/>
            <person name="Satoh T."/>
            <person name="Shirai Y."/>
            <person name="Takahashi Y."/>
            <person name="Nakagawa K."/>
            <person name="Okumura K."/>
            <person name="Nagase T."/>
            <person name="Nomura N."/>
            <person name="Kikuchi H."/>
            <person name="Masuho Y."/>
            <person name="Yamashita R."/>
            <person name="Nakai K."/>
            <person name="Yada T."/>
            <person name="Nakamura Y."/>
            <person name="Ohara O."/>
            <person name="Isogai T."/>
            <person name="Sugano S."/>
        </authorList>
    </citation>
    <scope>NUCLEOTIDE SEQUENCE [LARGE SCALE MRNA]</scope>
    <source>
        <tissue>Cerebellum</tissue>
    </source>
</reference>
<reference key="5">
    <citation type="journal article" date="2006" name="Nature">
        <title>The DNA sequence and biological annotation of human chromosome 1.</title>
        <authorList>
            <person name="Gregory S.G."/>
            <person name="Barlow K.F."/>
            <person name="McLay K.E."/>
            <person name="Kaul R."/>
            <person name="Swarbreck D."/>
            <person name="Dunham A."/>
            <person name="Scott C.E."/>
            <person name="Howe K.L."/>
            <person name="Woodfine K."/>
            <person name="Spencer C.C.A."/>
            <person name="Jones M.C."/>
            <person name="Gillson C."/>
            <person name="Searle S."/>
            <person name="Zhou Y."/>
            <person name="Kokocinski F."/>
            <person name="McDonald L."/>
            <person name="Evans R."/>
            <person name="Phillips K."/>
            <person name="Atkinson A."/>
            <person name="Cooper R."/>
            <person name="Jones C."/>
            <person name="Hall R.E."/>
            <person name="Andrews T.D."/>
            <person name="Lloyd C."/>
            <person name="Ainscough R."/>
            <person name="Almeida J.P."/>
            <person name="Ambrose K.D."/>
            <person name="Anderson F."/>
            <person name="Andrew R.W."/>
            <person name="Ashwell R.I.S."/>
            <person name="Aubin K."/>
            <person name="Babbage A.K."/>
            <person name="Bagguley C.L."/>
            <person name="Bailey J."/>
            <person name="Beasley H."/>
            <person name="Bethel G."/>
            <person name="Bird C.P."/>
            <person name="Bray-Allen S."/>
            <person name="Brown J.Y."/>
            <person name="Brown A.J."/>
            <person name="Buckley D."/>
            <person name="Burton J."/>
            <person name="Bye J."/>
            <person name="Carder C."/>
            <person name="Chapman J.C."/>
            <person name="Clark S.Y."/>
            <person name="Clarke G."/>
            <person name="Clee C."/>
            <person name="Cobley V."/>
            <person name="Collier R.E."/>
            <person name="Corby N."/>
            <person name="Coville G.J."/>
            <person name="Davies J."/>
            <person name="Deadman R."/>
            <person name="Dunn M."/>
            <person name="Earthrowl M."/>
            <person name="Ellington A.G."/>
            <person name="Errington H."/>
            <person name="Frankish A."/>
            <person name="Frankland J."/>
            <person name="French L."/>
            <person name="Garner P."/>
            <person name="Garnett J."/>
            <person name="Gay L."/>
            <person name="Ghori M.R.J."/>
            <person name="Gibson R."/>
            <person name="Gilby L.M."/>
            <person name="Gillett W."/>
            <person name="Glithero R.J."/>
            <person name="Grafham D.V."/>
            <person name="Griffiths C."/>
            <person name="Griffiths-Jones S."/>
            <person name="Grocock R."/>
            <person name="Hammond S."/>
            <person name="Harrison E.S.I."/>
            <person name="Hart E."/>
            <person name="Haugen E."/>
            <person name="Heath P.D."/>
            <person name="Holmes S."/>
            <person name="Holt K."/>
            <person name="Howden P.J."/>
            <person name="Hunt A.R."/>
            <person name="Hunt S.E."/>
            <person name="Hunter G."/>
            <person name="Isherwood J."/>
            <person name="James R."/>
            <person name="Johnson C."/>
            <person name="Johnson D."/>
            <person name="Joy A."/>
            <person name="Kay M."/>
            <person name="Kershaw J.K."/>
            <person name="Kibukawa M."/>
            <person name="Kimberley A.M."/>
            <person name="King A."/>
            <person name="Knights A.J."/>
            <person name="Lad H."/>
            <person name="Laird G."/>
            <person name="Lawlor S."/>
            <person name="Leongamornlert D.A."/>
            <person name="Lloyd D.M."/>
            <person name="Loveland J."/>
            <person name="Lovell J."/>
            <person name="Lush M.J."/>
            <person name="Lyne R."/>
            <person name="Martin S."/>
            <person name="Mashreghi-Mohammadi M."/>
            <person name="Matthews L."/>
            <person name="Matthews N.S.W."/>
            <person name="McLaren S."/>
            <person name="Milne S."/>
            <person name="Mistry S."/>
            <person name="Moore M.J.F."/>
            <person name="Nickerson T."/>
            <person name="O'Dell C.N."/>
            <person name="Oliver K."/>
            <person name="Palmeiri A."/>
            <person name="Palmer S.A."/>
            <person name="Parker A."/>
            <person name="Patel D."/>
            <person name="Pearce A.V."/>
            <person name="Peck A.I."/>
            <person name="Pelan S."/>
            <person name="Phelps K."/>
            <person name="Phillimore B.J."/>
            <person name="Plumb R."/>
            <person name="Rajan J."/>
            <person name="Raymond C."/>
            <person name="Rouse G."/>
            <person name="Saenphimmachak C."/>
            <person name="Sehra H.K."/>
            <person name="Sheridan E."/>
            <person name="Shownkeen R."/>
            <person name="Sims S."/>
            <person name="Skuce C.D."/>
            <person name="Smith M."/>
            <person name="Steward C."/>
            <person name="Subramanian S."/>
            <person name="Sycamore N."/>
            <person name="Tracey A."/>
            <person name="Tromans A."/>
            <person name="Van Helmond Z."/>
            <person name="Wall M."/>
            <person name="Wallis J.M."/>
            <person name="White S."/>
            <person name="Whitehead S.L."/>
            <person name="Wilkinson J.E."/>
            <person name="Willey D.L."/>
            <person name="Williams H."/>
            <person name="Wilming L."/>
            <person name="Wray P.W."/>
            <person name="Wu Z."/>
            <person name="Coulson A."/>
            <person name="Vaudin M."/>
            <person name="Sulston J.E."/>
            <person name="Durbin R.M."/>
            <person name="Hubbard T."/>
            <person name="Wooster R."/>
            <person name="Dunham I."/>
            <person name="Carter N.P."/>
            <person name="McVean G."/>
            <person name="Ross M.T."/>
            <person name="Harrow J."/>
            <person name="Olson M.V."/>
            <person name="Beck S."/>
            <person name="Rogers J."/>
            <person name="Bentley D.R."/>
        </authorList>
    </citation>
    <scope>NUCLEOTIDE SEQUENCE [LARGE SCALE GENOMIC DNA]</scope>
</reference>
<reference key="6">
    <citation type="submission" date="2005-09" db="EMBL/GenBank/DDBJ databases">
        <authorList>
            <person name="Mural R.J."/>
            <person name="Istrail S."/>
            <person name="Sutton G.G."/>
            <person name="Florea L."/>
            <person name="Halpern A.L."/>
            <person name="Mobarry C.M."/>
            <person name="Lippert R."/>
            <person name="Walenz B."/>
            <person name="Shatkay H."/>
            <person name="Dew I."/>
            <person name="Miller J.R."/>
            <person name="Flanigan M.J."/>
            <person name="Edwards N.J."/>
            <person name="Bolanos R."/>
            <person name="Fasulo D."/>
            <person name="Halldorsson B.V."/>
            <person name="Hannenhalli S."/>
            <person name="Turner R."/>
            <person name="Yooseph S."/>
            <person name="Lu F."/>
            <person name="Nusskern D.R."/>
            <person name="Shue B.C."/>
            <person name="Zheng X.H."/>
            <person name="Zhong F."/>
            <person name="Delcher A.L."/>
            <person name="Huson D.H."/>
            <person name="Kravitz S.A."/>
            <person name="Mouchard L."/>
            <person name="Reinert K."/>
            <person name="Remington K.A."/>
            <person name="Clark A.G."/>
            <person name="Waterman M.S."/>
            <person name="Eichler E.E."/>
            <person name="Adams M.D."/>
            <person name="Hunkapiller M.W."/>
            <person name="Myers E.W."/>
            <person name="Venter J.C."/>
        </authorList>
    </citation>
    <scope>NUCLEOTIDE SEQUENCE [LARGE SCALE GENOMIC DNA]</scope>
</reference>
<reference key="7">
    <citation type="journal article" date="2004" name="Genome Res.">
        <title>The status, quality, and expansion of the NIH full-length cDNA project: the Mammalian Gene Collection (MGC).</title>
        <authorList>
            <consortium name="The MGC Project Team"/>
        </authorList>
    </citation>
    <scope>NUCLEOTIDE SEQUENCE [LARGE SCALE MRNA]</scope>
    <scope>VARIANT TRP-32</scope>
    <source>
        <tissue>Skin</tissue>
        <tissue>Urinary bladder</tissue>
    </source>
</reference>
<reference key="8">
    <citation type="journal article" date="1998" name="Nat. Genet.">
        <title>Mutations in the gene encoding gap junction protein beta-3 associated with autosomal dominant hearing impairment.</title>
        <authorList>
            <person name="Xia J.-H."/>
            <person name="Liu C.-Y."/>
            <person name="Tang B.S."/>
            <person name="Pan Q."/>
            <person name="Huang L."/>
            <person name="Dai H.P."/>
            <person name="Zhang B.R."/>
            <person name="Xie W."/>
            <person name="Hu D.X."/>
            <person name="Zheng D."/>
            <person name="Shi X.L."/>
            <person name="Wang D.A."/>
            <person name="Xia K."/>
            <person name="Yu K.P."/>
            <person name="Liao X.D."/>
            <person name="Feng Y."/>
            <person name="Yang Y.F."/>
            <person name="Xiao J.Y."/>
            <person name="Xie D.H."/>
            <person name="Huang J.Z."/>
        </authorList>
    </citation>
    <scope>VARIANT DFNA2B LYS-183</scope>
</reference>
<reference key="9">
    <citation type="journal article" date="1999" name="J. Invest. Dermatol.">
        <title>Identification of a novel mutation R42P in the gap junction protein beta-3 associated with autosomal dominant erythrokeratoderma variabilis.</title>
        <authorList>
            <person name="Wilgoss A."/>
            <person name="Leigh I.M."/>
            <person name="Barnes M.R."/>
            <person name="Dopping-Hepenstal P."/>
            <person name="Eady R.A.J."/>
            <person name="Walter J.M."/>
            <person name="Kennedy C.T."/>
            <person name="Kelsell D.P."/>
        </authorList>
    </citation>
    <scope>VARIANT EKVP1 PRO-42</scope>
</reference>
<reference key="10">
    <citation type="journal article" date="2000" name="Eur. J. Hum. Genet.">
        <title>Connexin mutations associated with palmoplantar keratoderma and profound deafness in a single family.</title>
        <authorList>
            <person name="Kelsell D.P."/>
            <person name="Wilgoss A.L."/>
            <person name="Richard G."/>
            <person name="Stevens H.P."/>
            <person name="Munro C.S."/>
            <person name="Leigh I.M."/>
        </authorList>
    </citation>
    <scope>VARIANT TRP-32</scope>
</reference>
<reference key="11">
    <citation type="journal article" date="2000" name="Hum. Genet.">
        <title>The spectrum of mutations in erythrokeratodermias -- novel and de novo mutations in GJB3.</title>
        <authorList>
            <person name="Richard G."/>
            <person name="Brown N."/>
            <person name="Smith L.E."/>
            <person name="Terrinoni A."/>
            <person name="Melino G."/>
            <person name="Mackie R.M."/>
            <person name="Bale S.J."/>
            <person name="Uitto J."/>
        </authorList>
    </citation>
    <scope>VARIANTS EKVP1 PRO-42 AND LEU-137</scope>
</reference>
<reference key="12">
    <citation type="journal article" date="2000" name="Hum. Mol. Genet.">
        <title>Mutations in connexin31 underlie recessive as well as dominant non-syndromic hearing loss.</title>
        <authorList>
            <person name="Liu X.Z."/>
            <person name="Xia X.J."/>
            <person name="Xu L.R."/>
            <person name="Pandya A."/>
            <person name="Liang C.Y."/>
            <person name="Blanton S.H."/>
            <person name="Brown S.D."/>
            <person name="Steel K.P."/>
            <person name="Nance W.E."/>
        </authorList>
    </citation>
    <scope>VARIANT DFNA2B VAL-141</scope>
</reference>
<reference key="13">
    <citation type="journal article" date="2000" name="Hum. Mutat.">
        <title>Identification of seven novel SNPS (five nucleotide and two amino acid substitutions) in the connexin31 (GJB3) gene.</title>
        <authorList>
            <person name="Lopez-Bigas N."/>
            <person name="Rabionet R."/>
            <person name="Martinez E."/>
            <person name="Banchs I."/>
            <person name="Volpini V."/>
            <person name="Vance J.M."/>
            <person name="Arbones M.L."/>
            <person name="Estivill X."/>
        </authorList>
    </citation>
    <scope>VARIANTS TRP-32 AND ILE-200</scope>
</reference>
<reference key="14">
    <citation type="journal article" date="2009" name="Am. J. Med. Genet. A">
        <title>Connexin mutations in Brazilian patients with skin disorders with or without hearing loss.</title>
        <authorList>
            <person name="Alexandrino F."/>
            <person name="de Oliveira C.A."/>
            <person name="Magalhaes R.F."/>
            <person name="Florence M.E."/>
            <person name="de Souza E.M."/>
            <person name="Sartorato E.L."/>
        </authorList>
    </citation>
    <scope>VARIANTS TRP-32 AND ILE-200</scope>
</reference>
<evidence type="ECO:0000250" key="1"/>
<evidence type="ECO:0000255" key="2"/>
<evidence type="ECO:0000256" key="3">
    <source>
        <dbReference type="SAM" id="MobiDB-lite"/>
    </source>
</evidence>
<evidence type="ECO:0000269" key="4">
    <source>
    </source>
</evidence>
<evidence type="ECO:0000269" key="5">
    <source>
    </source>
</evidence>
<evidence type="ECO:0000269" key="6">
    <source>
    </source>
</evidence>
<evidence type="ECO:0000269" key="7">
    <source>
    </source>
</evidence>
<evidence type="ECO:0000269" key="8">
    <source>
    </source>
</evidence>
<evidence type="ECO:0000269" key="9">
    <source>
    </source>
</evidence>
<evidence type="ECO:0000269" key="10">
    <source>
    </source>
</evidence>
<evidence type="ECO:0000269" key="11">
    <source>
    </source>
</evidence>
<evidence type="ECO:0000269" key="12">
    <source>
    </source>
</evidence>
<evidence type="ECO:0000305" key="13"/>
<sequence>MDWKTLQALLSGVNKYSTAFGRIWLSVVFVFRVLVYVVAAERVWGDEQKDFDCNTKQPGCTNVCYDNYFPISNIRLWALQLIFVTCPSLLVILHVAYREERERRHRQKHGDQCAKLYDNAGKKHGGLWWTYLFSLIFKLIIEFLFLYLLHTLWHGFNMPRLVQCANVAPCPNIVDCYIARPTEKKIFTYFMVGASAVCIVLTICELCYLICHRVLRGLHKDKPRGGCSPSSSASRASTCRCHHKLVEAGEVDPDPGNNKLQASAPNLTPI</sequence>